<dbReference type="EMBL" id="BX548175">
    <property type="protein sequence ID" value="CAE21958.1"/>
    <property type="molecule type" value="Genomic_DNA"/>
</dbReference>
<dbReference type="RefSeq" id="WP_011131150.1">
    <property type="nucleotide sequence ID" value="NC_005071.1"/>
</dbReference>
<dbReference type="SMR" id="Q7V4Z9"/>
<dbReference type="KEGG" id="pmt:PMT_1783"/>
<dbReference type="eggNOG" id="COG0051">
    <property type="taxonomic scope" value="Bacteria"/>
</dbReference>
<dbReference type="HOGENOM" id="CLU_122625_1_3_3"/>
<dbReference type="OrthoDB" id="9804464at2"/>
<dbReference type="Proteomes" id="UP000001423">
    <property type="component" value="Chromosome"/>
</dbReference>
<dbReference type="GO" id="GO:1990904">
    <property type="term" value="C:ribonucleoprotein complex"/>
    <property type="evidence" value="ECO:0007669"/>
    <property type="project" value="UniProtKB-KW"/>
</dbReference>
<dbReference type="GO" id="GO:0005840">
    <property type="term" value="C:ribosome"/>
    <property type="evidence" value="ECO:0007669"/>
    <property type="project" value="UniProtKB-KW"/>
</dbReference>
<dbReference type="GO" id="GO:0003735">
    <property type="term" value="F:structural constituent of ribosome"/>
    <property type="evidence" value="ECO:0007669"/>
    <property type="project" value="InterPro"/>
</dbReference>
<dbReference type="GO" id="GO:0000049">
    <property type="term" value="F:tRNA binding"/>
    <property type="evidence" value="ECO:0007669"/>
    <property type="project" value="UniProtKB-UniRule"/>
</dbReference>
<dbReference type="GO" id="GO:0006412">
    <property type="term" value="P:translation"/>
    <property type="evidence" value="ECO:0007669"/>
    <property type="project" value="UniProtKB-UniRule"/>
</dbReference>
<dbReference type="FunFam" id="3.30.70.600:FF:000001">
    <property type="entry name" value="30S ribosomal protein S10"/>
    <property type="match status" value="1"/>
</dbReference>
<dbReference type="Gene3D" id="3.30.70.600">
    <property type="entry name" value="Ribosomal protein S10 domain"/>
    <property type="match status" value="1"/>
</dbReference>
<dbReference type="HAMAP" id="MF_00508">
    <property type="entry name" value="Ribosomal_uS10"/>
    <property type="match status" value="1"/>
</dbReference>
<dbReference type="InterPro" id="IPR001848">
    <property type="entry name" value="Ribosomal_uS10"/>
</dbReference>
<dbReference type="InterPro" id="IPR027486">
    <property type="entry name" value="Ribosomal_uS10_dom"/>
</dbReference>
<dbReference type="InterPro" id="IPR036838">
    <property type="entry name" value="Ribosomal_uS10_dom_sf"/>
</dbReference>
<dbReference type="NCBIfam" id="NF001861">
    <property type="entry name" value="PRK00596.1"/>
    <property type="match status" value="1"/>
</dbReference>
<dbReference type="NCBIfam" id="TIGR01049">
    <property type="entry name" value="rpsJ_bact"/>
    <property type="match status" value="1"/>
</dbReference>
<dbReference type="PANTHER" id="PTHR11700">
    <property type="entry name" value="30S RIBOSOMAL PROTEIN S10 FAMILY MEMBER"/>
    <property type="match status" value="1"/>
</dbReference>
<dbReference type="Pfam" id="PF00338">
    <property type="entry name" value="Ribosomal_S10"/>
    <property type="match status" value="1"/>
</dbReference>
<dbReference type="PRINTS" id="PR00971">
    <property type="entry name" value="RIBOSOMALS10"/>
</dbReference>
<dbReference type="SMART" id="SM01403">
    <property type="entry name" value="Ribosomal_S10"/>
    <property type="match status" value="1"/>
</dbReference>
<dbReference type="SUPFAM" id="SSF54999">
    <property type="entry name" value="Ribosomal protein S10"/>
    <property type="match status" value="1"/>
</dbReference>
<proteinExistence type="inferred from homology"/>
<gene>
    <name evidence="1" type="primary">rpsJ</name>
    <name evidence="1" type="synonym">rps10</name>
    <name type="ordered locus">PMT_1783</name>
</gene>
<keyword id="KW-1185">Reference proteome</keyword>
<keyword id="KW-0687">Ribonucleoprotein</keyword>
<keyword id="KW-0689">Ribosomal protein</keyword>
<protein>
    <recommendedName>
        <fullName evidence="1">Small ribosomal subunit protein uS10</fullName>
    </recommendedName>
    <alternativeName>
        <fullName evidence="2">30S ribosomal protein S10</fullName>
    </alternativeName>
</protein>
<name>RS10_PROMM</name>
<organism>
    <name type="scientific">Prochlorococcus marinus (strain MIT 9313)</name>
    <dbReference type="NCBI Taxonomy" id="74547"/>
    <lineage>
        <taxon>Bacteria</taxon>
        <taxon>Bacillati</taxon>
        <taxon>Cyanobacteriota</taxon>
        <taxon>Cyanophyceae</taxon>
        <taxon>Synechococcales</taxon>
        <taxon>Prochlorococcaceae</taxon>
        <taxon>Prochlorococcus</taxon>
    </lineage>
</organism>
<accession>Q7V4Z9</accession>
<sequence length="106" mass="12018">MSTAIAQQKIRIRLKAFDRRMLDLSCDKIIETADNTAATAIGPIPLPTKRKIYCVLCSPHVDKDSREHFETRTHRRIIDIYNPSAKTIDALMKLDLPSGVDIEVKL</sequence>
<reference key="1">
    <citation type="journal article" date="2003" name="Nature">
        <title>Genome divergence in two Prochlorococcus ecotypes reflects oceanic niche differentiation.</title>
        <authorList>
            <person name="Rocap G."/>
            <person name="Larimer F.W."/>
            <person name="Lamerdin J.E."/>
            <person name="Malfatti S."/>
            <person name="Chain P."/>
            <person name="Ahlgren N.A."/>
            <person name="Arellano A."/>
            <person name="Coleman M."/>
            <person name="Hauser L."/>
            <person name="Hess W.R."/>
            <person name="Johnson Z.I."/>
            <person name="Land M.L."/>
            <person name="Lindell D."/>
            <person name="Post A.F."/>
            <person name="Regala W."/>
            <person name="Shah M."/>
            <person name="Shaw S.L."/>
            <person name="Steglich C."/>
            <person name="Sullivan M.B."/>
            <person name="Ting C.S."/>
            <person name="Tolonen A."/>
            <person name="Webb E.A."/>
            <person name="Zinser E.R."/>
            <person name="Chisholm S.W."/>
        </authorList>
    </citation>
    <scope>NUCLEOTIDE SEQUENCE [LARGE SCALE GENOMIC DNA]</scope>
    <source>
        <strain>MIT 9313</strain>
    </source>
</reference>
<evidence type="ECO:0000255" key="1">
    <source>
        <dbReference type="HAMAP-Rule" id="MF_00508"/>
    </source>
</evidence>
<evidence type="ECO:0000305" key="2"/>
<comment type="function">
    <text evidence="1">Involved in the binding of tRNA to the ribosomes.</text>
</comment>
<comment type="subunit">
    <text evidence="1">Part of the 30S ribosomal subunit.</text>
</comment>
<comment type="similarity">
    <text evidence="1">Belongs to the universal ribosomal protein uS10 family.</text>
</comment>
<feature type="chain" id="PRO_0000146576" description="Small ribosomal subunit protein uS10">
    <location>
        <begin position="1"/>
        <end position="106"/>
    </location>
</feature>